<accession>Q4R6C7</accession>
<dbReference type="EC" id="2.1.1.-" evidence="3"/>
<dbReference type="EMBL" id="AB169258">
    <property type="protein sequence ID" value="BAE01348.1"/>
    <property type="molecule type" value="mRNA"/>
</dbReference>
<dbReference type="RefSeq" id="NP_001270723.1">
    <property type="nucleotide sequence ID" value="NM_001283794.1"/>
</dbReference>
<dbReference type="SMR" id="Q4R6C7"/>
<dbReference type="STRING" id="9541.ENSMFAP00000006895"/>
<dbReference type="eggNOG" id="KOG1253">
    <property type="taxonomic scope" value="Eukaryota"/>
</dbReference>
<dbReference type="Proteomes" id="UP000233100">
    <property type="component" value="Unplaced"/>
</dbReference>
<dbReference type="GO" id="GO:0005730">
    <property type="term" value="C:nucleolus"/>
    <property type="evidence" value="ECO:0000250"/>
    <property type="project" value="UniProtKB"/>
</dbReference>
<dbReference type="GO" id="GO:0005634">
    <property type="term" value="C:nucleus"/>
    <property type="evidence" value="ECO:0000250"/>
    <property type="project" value="UniProtKB"/>
</dbReference>
<dbReference type="GO" id="GO:0016423">
    <property type="term" value="F:tRNA (guanine) methyltransferase activity"/>
    <property type="evidence" value="ECO:0007669"/>
    <property type="project" value="InterPro"/>
</dbReference>
<dbReference type="GO" id="GO:0000049">
    <property type="term" value="F:tRNA binding"/>
    <property type="evidence" value="ECO:0007669"/>
    <property type="project" value="UniProtKB-KW"/>
</dbReference>
<dbReference type="GO" id="GO:0008270">
    <property type="term" value="F:zinc ion binding"/>
    <property type="evidence" value="ECO:0007669"/>
    <property type="project" value="UniProtKB-KW"/>
</dbReference>
<dbReference type="GO" id="GO:0002940">
    <property type="term" value="P:tRNA N2-guanine methylation"/>
    <property type="evidence" value="ECO:0007669"/>
    <property type="project" value="TreeGrafter"/>
</dbReference>
<dbReference type="CDD" id="cd02440">
    <property type="entry name" value="AdoMet_MTases"/>
    <property type="match status" value="1"/>
</dbReference>
<dbReference type="FunFam" id="3.40.50.150:FF:000098">
    <property type="entry name" value="Trmt1-like isoform 1"/>
    <property type="match status" value="1"/>
</dbReference>
<dbReference type="FunFam" id="3.30.56.70:FF:000001">
    <property type="entry name" value="tRNA (guanine(26)-N(2))-dimethyltransferase"/>
    <property type="match status" value="1"/>
</dbReference>
<dbReference type="Gene3D" id="3.30.56.70">
    <property type="entry name" value="N2,N2-dimethylguanosine tRNA methyltransferase, C-terminal domain"/>
    <property type="match status" value="1"/>
</dbReference>
<dbReference type="Gene3D" id="3.40.50.150">
    <property type="entry name" value="Vaccinia Virus protein VP39"/>
    <property type="match status" value="1"/>
</dbReference>
<dbReference type="InterPro" id="IPR029063">
    <property type="entry name" value="SAM-dependent_MTases_sf"/>
</dbReference>
<dbReference type="InterPro" id="IPR002905">
    <property type="entry name" value="Trm1"/>
</dbReference>
<dbReference type="InterPro" id="IPR042296">
    <property type="entry name" value="tRNA_met_Trm1_C"/>
</dbReference>
<dbReference type="InterPro" id="IPR013087">
    <property type="entry name" value="Znf_C2H2_type"/>
</dbReference>
<dbReference type="PANTHER" id="PTHR10631">
    <property type="entry name" value="N 2 ,N 2 -DIMETHYLGUANOSINE TRNA METHYLTRANSFERASE"/>
    <property type="match status" value="1"/>
</dbReference>
<dbReference type="PANTHER" id="PTHR10631:SF1">
    <property type="entry name" value="TRMT1-LIKE PROTEIN"/>
    <property type="match status" value="1"/>
</dbReference>
<dbReference type="Pfam" id="PF02005">
    <property type="entry name" value="TRM"/>
    <property type="match status" value="2"/>
</dbReference>
<dbReference type="SMART" id="SM00355">
    <property type="entry name" value="ZnF_C2H2"/>
    <property type="match status" value="2"/>
</dbReference>
<dbReference type="SUPFAM" id="SSF53335">
    <property type="entry name" value="S-adenosyl-L-methionine-dependent methyltransferases"/>
    <property type="match status" value="1"/>
</dbReference>
<dbReference type="PROSITE" id="PS51626">
    <property type="entry name" value="SAM_MT_TRM1"/>
    <property type="match status" value="1"/>
</dbReference>
<dbReference type="PROSITE" id="PS00028">
    <property type="entry name" value="ZINC_FINGER_C2H2_1"/>
    <property type="match status" value="1"/>
</dbReference>
<dbReference type="PROSITE" id="PS50157">
    <property type="entry name" value="ZINC_FINGER_C2H2_2"/>
    <property type="match status" value="1"/>
</dbReference>
<protein>
    <recommendedName>
        <fullName evidence="6">tRNA (guanine(27)-N(2))-dimethyltransferase</fullName>
        <ecNumber evidence="3">2.1.1.-</ecNumber>
    </recommendedName>
    <alternativeName>
        <fullName evidence="1">tRNA methyltransferase 1-like protein</fullName>
        <shortName evidence="1">TRMT1-like protein</shortName>
    </alternativeName>
</protein>
<comment type="function">
    <text evidence="3">Specifically dimethylates a single guanine residue at position 27 of tRNA(Tyr) using S-adenosyl-L-methionine as donor of the methyl groups. Dimethylation at position 27 of tRNA(Tyr) is required for efficient translation of tyrosine codons. Also required to maintain 3-(3-amino-3-carboxypropyl)uridine (acp3U) in the D-loop of several cytoplasmic tRNAs.</text>
</comment>
<comment type="catalytic activity">
    <reaction evidence="3">
        <text>guanosine(27) in tRNA(Tyr) + 2 S-adenosyl-L-methionine = N(2)-dimethylguanosine(27) in tRNA(Tyr) + 2 S-adenosyl-L-homocysteine + 2 H(+)</text>
        <dbReference type="Rhea" id="RHEA:83895"/>
        <dbReference type="Rhea" id="RHEA-COMP:20240"/>
        <dbReference type="Rhea" id="RHEA-COMP:20241"/>
        <dbReference type="ChEBI" id="CHEBI:15378"/>
        <dbReference type="ChEBI" id="CHEBI:57856"/>
        <dbReference type="ChEBI" id="CHEBI:59789"/>
        <dbReference type="ChEBI" id="CHEBI:74269"/>
        <dbReference type="ChEBI" id="CHEBI:74513"/>
    </reaction>
    <physiologicalReaction direction="left-to-right" evidence="3">
        <dbReference type="Rhea" id="RHEA:83896"/>
    </physiologicalReaction>
</comment>
<comment type="subcellular location">
    <subcellularLocation>
        <location evidence="3">Nucleus</location>
        <location evidence="3">Nucleolus</location>
    </subcellularLocation>
</comment>
<comment type="similarity">
    <text evidence="5">Belongs to the class I-like SAM-binding methyltransferase superfamily. Trm1 family.</text>
</comment>
<name>TRM1L_MACFA</name>
<keyword id="KW-1017">Isopeptide bond</keyword>
<keyword id="KW-0479">Metal-binding</keyword>
<keyword id="KW-0489">Methyltransferase</keyword>
<keyword id="KW-0539">Nucleus</keyword>
<keyword id="KW-0597">Phosphoprotein</keyword>
<keyword id="KW-1185">Reference proteome</keyword>
<keyword id="KW-0694">RNA-binding</keyword>
<keyword id="KW-0949">S-adenosyl-L-methionine</keyword>
<keyword id="KW-0808">Transferase</keyword>
<keyword id="KW-0819">tRNA processing</keyword>
<keyword id="KW-0820">tRNA-binding</keyword>
<keyword id="KW-0832">Ubl conjugation</keyword>
<keyword id="KW-0862">Zinc</keyword>
<keyword id="KW-0863">Zinc-finger</keyword>
<organism>
    <name type="scientific">Macaca fascicularis</name>
    <name type="common">Crab-eating macaque</name>
    <name type="synonym">Cynomolgus monkey</name>
    <dbReference type="NCBI Taxonomy" id="9541"/>
    <lineage>
        <taxon>Eukaryota</taxon>
        <taxon>Metazoa</taxon>
        <taxon>Chordata</taxon>
        <taxon>Craniata</taxon>
        <taxon>Vertebrata</taxon>
        <taxon>Euteleostomi</taxon>
        <taxon>Mammalia</taxon>
        <taxon>Eutheria</taxon>
        <taxon>Euarchontoglires</taxon>
        <taxon>Primates</taxon>
        <taxon>Haplorrhini</taxon>
        <taxon>Catarrhini</taxon>
        <taxon>Cercopithecidae</taxon>
        <taxon>Cercopithecinae</taxon>
        <taxon>Macaca</taxon>
    </lineage>
</organism>
<gene>
    <name type="primary">TRMT1L</name>
    <name type="ORF">QtsA-18292</name>
</gene>
<proteinExistence type="evidence at transcript level"/>
<feature type="chain" id="PRO_0000317569" description="tRNA (guanine(27)-N(2))-dimethyltransferase">
    <location>
        <begin position="1"/>
        <end position="693"/>
    </location>
</feature>
<feature type="domain" description="Trm1 methyltransferase" evidence="5">
    <location>
        <begin position="187"/>
        <end position="648"/>
    </location>
</feature>
<feature type="zinc finger region" description="C2H2-type" evidence="4">
    <location>
        <begin position="144"/>
        <end position="166"/>
    </location>
</feature>
<feature type="short sequence motif" description="Nucleolar localization signal" evidence="3">
    <location>
        <begin position="95"/>
        <end position="99"/>
    </location>
</feature>
<feature type="binding site" evidence="2">
    <location>
        <position position="220"/>
    </location>
    <ligand>
        <name>S-adenosyl-L-methionine</name>
        <dbReference type="ChEBI" id="CHEBI:59789"/>
    </ligand>
</feature>
<feature type="binding site" evidence="2">
    <location>
        <position position="267"/>
    </location>
    <ligand>
        <name>S-adenosyl-L-methionine</name>
        <dbReference type="ChEBI" id="CHEBI:59789"/>
    </ligand>
</feature>
<feature type="binding site" evidence="2">
    <location>
        <position position="317"/>
    </location>
    <ligand>
        <name>S-adenosyl-L-methionine</name>
        <dbReference type="ChEBI" id="CHEBI:59789"/>
    </ligand>
</feature>
<feature type="binding site" evidence="2">
    <location>
        <position position="318"/>
    </location>
    <ligand>
        <name>S-adenosyl-L-methionine</name>
        <dbReference type="ChEBI" id="CHEBI:59789"/>
    </ligand>
</feature>
<feature type="binding site" evidence="2">
    <location>
        <position position="448"/>
    </location>
    <ligand>
        <name>Zn(2+)</name>
        <dbReference type="ChEBI" id="CHEBI:29105"/>
    </ligand>
</feature>
<feature type="binding site" evidence="2">
    <location>
        <position position="451"/>
    </location>
    <ligand>
        <name>Zn(2+)</name>
        <dbReference type="ChEBI" id="CHEBI:29105"/>
    </ligand>
</feature>
<feature type="binding site" evidence="2">
    <location>
        <position position="473"/>
    </location>
    <ligand>
        <name>Zn(2+)</name>
        <dbReference type="ChEBI" id="CHEBI:29105"/>
    </ligand>
</feature>
<feature type="binding site" evidence="2">
    <location>
        <position position="475"/>
    </location>
    <ligand>
        <name>Zn(2+)</name>
        <dbReference type="ChEBI" id="CHEBI:29105"/>
    </ligand>
</feature>
<feature type="modified residue" description="Phosphoserine" evidence="3">
    <location>
        <position position="572"/>
    </location>
</feature>
<feature type="modified residue" description="Phosphoserine" evidence="3">
    <location>
        <position position="667"/>
    </location>
</feature>
<feature type="cross-link" description="Glycyl lysine isopeptide (Lys-Gly) (interchain with G-Cter in SUMO2)" evidence="3">
    <location>
        <position position="545"/>
    </location>
</feature>
<sequence length="693" mass="78261">MENMAEEELLPLEKEEVEVAQVQVQVPSLASAPEEAKSKRHISIQRQLADLEKLAFVTEGNFDSTSSLNSDNLDAGNRQACPLCPKEKFRACNSHKLRRHLQNLHWKVSVEFEGYRMCICHLPCRPVKPNIIGEQISSKMGAHYHCIICSATITRRTDMLGHVRRHMNKGETKSSYIAASTAKPPKEILKEADTDVQVCPNYSIPQKTDSYFNPKMKLNRQLIFCTLAALAEERKPLECLDAFGATGIMGLQWAKHLGNAVKVTINDLNENSVTLIQENCYLNKLKVVVDSKEKEKSDDILEEGEKNIGNIKVTKMDANVLMHLRSFDFIHLDPFGTSVNYLDSAFRNIRNLGIVSVTSTDISSLYAKAQHVARRHYGCNIVRTEYYKELAARIVVAAVARAAARCNKGIEVLFAVALEHFVLVVVRVLRGPTSADETAKKIQYLIHCQWCEERIFQKDGNMVEENPYRQLPCNCHGSMPGKTAIELGPLWSSSLFNTGFLKRMLFESLHHGLDDIQTLIKTLIFESECTPQSQFSIHTPSNLNKQEENGVFIKTTDDTITDNYIAQGKRKSNEMITNLGKKQKTDVSTEHPPFYYNIHRHSIKGMNMPKLKKFLCYLSQAGFRVSRTHFDPMGVRTDAPLMQFKSILLKYSTPTYTGGQSESLVQSASEDTVTERVEMSVNDKAEASGCRRW</sequence>
<evidence type="ECO:0000250" key="1">
    <source>
        <dbReference type="UniProtKB" id="A2RSY6"/>
    </source>
</evidence>
<evidence type="ECO:0000250" key="2">
    <source>
        <dbReference type="UniProtKB" id="O67010"/>
    </source>
</evidence>
<evidence type="ECO:0000250" key="3">
    <source>
        <dbReference type="UniProtKB" id="Q7Z2T5"/>
    </source>
</evidence>
<evidence type="ECO:0000255" key="4">
    <source>
        <dbReference type="PROSITE-ProRule" id="PRU00042"/>
    </source>
</evidence>
<evidence type="ECO:0000255" key="5">
    <source>
        <dbReference type="PROSITE-ProRule" id="PRU00958"/>
    </source>
</evidence>
<evidence type="ECO:0000305" key="6"/>
<reference key="1">
    <citation type="submission" date="2005-06" db="EMBL/GenBank/DDBJ databases">
        <title>DNA sequences of macaque genes expressed in brain or testis and its evolutionary implications.</title>
        <authorList>
            <consortium name="International consortium for macaque cDNA sequencing and analysis"/>
        </authorList>
    </citation>
    <scope>NUCLEOTIDE SEQUENCE [LARGE SCALE MRNA]</scope>
    <source>
        <tissue>Testis</tissue>
    </source>
</reference>